<evidence type="ECO:0000250" key="1">
    <source>
        <dbReference type="UniProtKB" id="P55249"/>
    </source>
</evidence>
<evidence type="ECO:0000255" key="2">
    <source>
        <dbReference type="PROSITE-ProRule" id="PRU00152"/>
    </source>
</evidence>
<evidence type="ECO:0000255" key="3">
    <source>
        <dbReference type="PROSITE-ProRule" id="PRU00726"/>
    </source>
</evidence>
<evidence type="ECO:0000269" key="4">
    <source>
    </source>
</evidence>
<evidence type="ECO:0000303" key="5">
    <source>
    </source>
</evidence>
<evidence type="ECO:0000305" key="6"/>
<evidence type="ECO:0000305" key="7">
    <source>
    </source>
</evidence>
<evidence type="ECO:0000312" key="8">
    <source>
        <dbReference type="RGD" id="1307642"/>
    </source>
</evidence>
<comment type="function">
    <text evidence="1 4">Catalyzes the regio and stereo-specific incorporation of a single molecule of dioxygen into free and esterified polyunsaturated fatty acids generating lipid hydroperoxides that can be further reduced to the corresponding hydroxy species (PubMed:23382512). Shows increasing catalytic activity within the series arachidonic acid &lt; 5,8,11-eicosatrienoic acid &lt; linoleic acid &lt; 8,11,14-eicosatrienoic acid (By similarity).</text>
</comment>
<comment type="catalytic activity">
    <reaction evidence="4">
        <text>(5Z,8Z,11Z,14Z)-eicosatetraenoate + O2 = (12S)-hydroperoxy-(5Z,8Z,10E,14Z)-eicosatetraenoate</text>
        <dbReference type="Rhea" id="RHEA:10428"/>
        <dbReference type="ChEBI" id="CHEBI:15379"/>
        <dbReference type="ChEBI" id="CHEBI:32395"/>
        <dbReference type="ChEBI" id="CHEBI:57444"/>
        <dbReference type="EC" id="1.13.11.31"/>
    </reaction>
    <physiologicalReaction direction="left-to-right" evidence="7">
        <dbReference type="Rhea" id="RHEA:10429"/>
    </physiologicalReaction>
</comment>
<comment type="catalytic activity">
    <reaction evidence="1">
        <text>1-O-methyl-(9Z,12Z)-octadecadienoate + O2 = 1-O-methyl-(13S)-hydroperoxy-(9Z,11E)-octadecadienoate</text>
        <dbReference type="Rhea" id="RHEA:41756"/>
        <dbReference type="ChEBI" id="CHEBI:15379"/>
        <dbReference type="ChEBI" id="CHEBI:69080"/>
        <dbReference type="ChEBI" id="CHEBI:78040"/>
    </reaction>
    <physiologicalReaction direction="left-to-right" evidence="1">
        <dbReference type="Rhea" id="RHEA:41757"/>
    </physiologicalReaction>
</comment>
<comment type="catalytic activity">
    <reaction evidence="1">
        <text>(8Z,11Z,14Z)-eicosatrienoate + O2 = (12S)-hydroperoxy-(8Z,10E,14Z)-eicosatrienoate</text>
        <dbReference type="Rhea" id="RHEA:41328"/>
        <dbReference type="ChEBI" id="CHEBI:15379"/>
        <dbReference type="ChEBI" id="CHEBI:71589"/>
        <dbReference type="ChEBI" id="CHEBI:78047"/>
    </reaction>
    <physiologicalReaction direction="left-to-right" evidence="1">
        <dbReference type="Rhea" id="RHEA:41329"/>
    </physiologicalReaction>
</comment>
<comment type="catalytic activity">
    <reaction evidence="1">
        <text>(5Z,8Z,11Z)-eicosatrienoate + O2 = (12S)-hydroperoxy-(5Z,8Z,10E)-eicosatrienoate</text>
        <dbReference type="Rhea" id="RHEA:41324"/>
        <dbReference type="ChEBI" id="CHEBI:15379"/>
        <dbReference type="ChEBI" id="CHEBI:78043"/>
        <dbReference type="ChEBI" id="CHEBI:78046"/>
    </reaction>
    <physiologicalReaction direction="left-to-right" evidence="1">
        <dbReference type="Rhea" id="RHEA:41325"/>
    </physiologicalReaction>
</comment>
<comment type="catalytic activity">
    <reaction evidence="1">
        <text>1-O-methyl-(5Z,8Z,11Z,14Z)-eicosatetraenoate + O2 = 1-O-methyl-(12S)-hydroperoxy-(5Z,8Z,10E,14Z)-eicosatetraenoate</text>
        <dbReference type="Rhea" id="RHEA:41315"/>
        <dbReference type="ChEBI" id="CHEBI:15379"/>
        <dbReference type="ChEBI" id="CHEBI:78033"/>
        <dbReference type="ChEBI" id="CHEBI:78035"/>
    </reaction>
    <physiologicalReaction direction="left-to-right" evidence="1">
        <dbReference type="Rhea" id="RHEA:41316"/>
    </physiologicalReaction>
</comment>
<comment type="catalytic activity">
    <reaction evidence="1">
        <text>(9Z,12Z)-octadecadienoate + O2 = (13S)-hydroperoxy-(9Z,11E)-octadecadienoate</text>
        <dbReference type="Rhea" id="RHEA:22780"/>
        <dbReference type="ChEBI" id="CHEBI:15379"/>
        <dbReference type="ChEBI" id="CHEBI:30245"/>
        <dbReference type="ChEBI" id="CHEBI:57466"/>
    </reaction>
    <physiologicalReaction direction="left-to-right" evidence="1">
        <dbReference type="Rhea" id="RHEA:22781"/>
    </physiologicalReaction>
</comment>
<comment type="catalytic activity">
    <reaction evidence="1">
        <text>(4Z,7Z,10Z,13Z,16Z,19Z)-docosahexaenoate + O2 = (14S)-hydroperoxy-(4Z,7Z,10Z,12E,16Z,19Z)-docosahexaenoate</text>
        <dbReference type="Rhea" id="RHEA:41332"/>
        <dbReference type="ChEBI" id="CHEBI:15379"/>
        <dbReference type="ChEBI" id="CHEBI:77016"/>
        <dbReference type="ChEBI" id="CHEBI:78048"/>
    </reaction>
    <physiologicalReaction direction="left-to-right" evidence="1">
        <dbReference type="Rhea" id="RHEA:41333"/>
    </physiologicalReaction>
</comment>
<comment type="cofactor">
    <cofactor evidence="3">
        <name>Fe cation</name>
        <dbReference type="ChEBI" id="CHEBI:24875"/>
    </cofactor>
    <text evidence="3">Binds 1 Fe cation per subunit.</text>
</comment>
<comment type="activity regulation">
    <text evidence="1">Arachidonate 12-lipoxygenase activity is decreased when the pH decreases from 7.4 to 6.0.</text>
</comment>
<comment type="pathway">
    <text>Lipid metabolism; hydroperoxy eicosatetraenoic acid biosynthesis.</text>
</comment>
<comment type="subcellular location">
    <subcellularLocation>
        <location evidence="3">Cytoplasm</location>
    </subcellularLocation>
</comment>
<comment type="similarity">
    <text evidence="6">Belongs to the lipoxygenase family.</text>
</comment>
<feature type="chain" id="PRO_0000423431" description="Polyunsaturated fatty acid (12S)/(13S)-lipoxygenase, epidermal-type">
    <location>
        <begin position="1"/>
        <end position="662"/>
    </location>
</feature>
<feature type="domain" description="PLAT" evidence="2">
    <location>
        <begin position="2"/>
        <end position="114"/>
    </location>
</feature>
<feature type="domain" description="Lipoxygenase" evidence="3">
    <location>
        <begin position="114"/>
        <end position="662"/>
    </location>
</feature>
<feature type="binding site" evidence="3">
    <location>
        <position position="360"/>
    </location>
    <ligand>
        <name>Fe cation</name>
        <dbReference type="ChEBI" id="CHEBI:24875"/>
        <note>catalytic</note>
    </ligand>
</feature>
<feature type="binding site" evidence="3">
    <location>
        <position position="365"/>
    </location>
    <ligand>
        <name>Fe cation</name>
        <dbReference type="ChEBI" id="CHEBI:24875"/>
        <note>catalytic</note>
    </ligand>
</feature>
<feature type="binding site" evidence="3">
    <location>
        <position position="540"/>
    </location>
    <ligand>
        <name>Fe cation</name>
        <dbReference type="ChEBI" id="CHEBI:24875"/>
        <note>catalytic</note>
    </ligand>
</feature>
<feature type="binding site" evidence="3">
    <location>
        <position position="544"/>
    </location>
    <ligand>
        <name>Fe cation</name>
        <dbReference type="ChEBI" id="CHEBI:24875"/>
        <note>catalytic</note>
    </ligand>
</feature>
<feature type="binding site" evidence="3">
    <location>
        <position position="662"/>
    </location>
    <ligand>
        <name>Fe cation</name>
        <dbReference type="ChEBI" id="CHEBI:24875"/>
        <note>catalytic</note>
    </ligand>
</feature>
<protein>
    <recommendedName>
        <fullName evidence="6">Polyunsaturated fatty acid (12S)/(13S)-lipoxygenase, epidermal-type</fullName>
        <ecNumber evidence="1">1.13.11.-</ecNumber>
    </recommendedName>
    <alternativeName>
        <fullName>Arachidonate (12S)-lipoxygenase, epidermal-type</fullName>
        <shortName evidence="5">12-LOX-e</shortName>
        <shortName evidence="1">e(12S)-LOX</shortName>
        <ecNumber evidence="4">1.13.11.31</ecNumber>
    </alternativeName>
    <alternativeName>
        <fullName evidence="1">Linoleate (13S)-lipoxygenase</fullName>
    </alternativeName>
</protein>
<reference key="1">
    <citation type="journal article" date="2004" name="Nature">
        <title>Genome sequence of the Brown Norway rat yields insights into mammalian evolution.</title>
        <authorList>
            <person name="Gibbs R.A."/>
            <person name="Weinstock G.M."/>
            <person name="Metzker M.L."/>
            <person name="Muzny D.M."/>
            <person name="Sodergren E.J."/>
            <person name="Scherer S."/>
            <person name="Scott G."/>
            <person name="Steffen D."/>
            <person name="Worley K.C."/>
            <person name="Burch P.E."/>
            <person name="Okwuonu G."/>
            <person name="Hines S."/>
            <person name="Lewis L."/>
            <person name="Deramo C."/>
            <person name="Delgado O."/>
            <person name="Dugan-Rocha S."/>
            <person name="Miner G."/>
            <person name="Morgan M."/>
            <person name="Hawes A."/>
            <person name="Gill R."/>
            <person name="Holt R.A."/>
            <person name="Adams M.D."/>
            <person name="Amanatides P.G."/>
            <person name="Baden-Tillson H."/>
            <person name="Barnstead M."/>
            <person name="Chin S."/>
            <person name="Evans C.A."/>
            <person name="Ferriera S."/>
            <person name="Fosler C."/>
            <person name="Glodek A."/>
            <person name="Gu Z."/>
            <person name="Jennings D."/>
            <person name="Kraft C.L."/>
            <person name="Nguyen T."/>
            <person name="Pfannkoch C.M."/>
            <person name="Sitter C."/>
            <person name="Sutton G.G."/>
            <person name="Venter J.C."/>
            <person name="Woodage T."/>
            <person name="Smith D."/>
            <person name="Lee H.-M."/>
            <person name="Gustafson E."/>
            <person name="Cahill P."/>
            <person name="Kana A."/>
            <person name="Doucette-Stamm L."/>
            <person name="Weinstock K."/>
            <person name="Fechtel K."/>
            <person name="Weiss R.B."/>
            <person name="Dunn D.M."/>
            <person name="Green E.D."/>
            <person name="Blakesley R.W."/>
            <person name="Bouffard G.G."/>
            <person name="De Jong P.J."/>
            <person name="Osoegawa K."/>
            <person name="Zhu B."/>
            <person name="Marra M."/>
            <person name="Schein J."/>
            <person name="Bosdet I."/>
            <person name="Fjell C."/>
            <person name="Jones S."/>
            <person name="Krzywinski M."/>
            <person name="Mathewson C."/>
            <person name="Siddiqui A."/>
            <person name="Wye N."/>
            <person name="McPherson J."/>
            <person name="Zhao S."/>
            <person name="Fraser C.M."/>
            <person name="Shetty J."/>
            <person name="Shatsman S."/>
            <person name="Geer K."/>
            <person name="Chen Y."/>
            <person name="Abramzon S."/>
            <person name="Nierman W.C."/>
            <person name="Havlak P.H."/>
            <person name="Chen R."/>
            <person name="Durbin K.J."/>
            <person name="Egan A."/>
            <person name="Ren Y."/>
            <person name="Song X.-Z."/>
            <person name="Li B."/>
            <person name="Liu Y."/>
            <person name="Qin X."/>
            <person name="Cawley S."/>
            <person name="Cooney A.J."/>
            <person name="D'Souza L.M."/>
            <person name="Martin K."/>
            <person name="Wu J.Q."/>
            <person name="Gonzalez-Garay M.L."/>
            <person name="Jackson A.R."/>
            <person name="Kalafus K.J."/>
            <person name="McLeod M.P."/>
            <person name="Milosavljevic A."/>
            <person name="Virk D."/>
            <person name="Volkov A."/>
            <person name="Wheeler D.A."/>
            <person name="Zhang Z."/>
            <person name="Bailey J.A."/>
            <person name="Eichler E.E."/>
            <person name="Tuzun E."/>
            <person name="Birney E."/>
            <person name="Mongin E."/>
            <person name="Ureta-Vidal A."/>
            <person name="Woodwark C."/>
            <person name="Zdobnov E."/>
            <person name="Bork P."/>
            <person name="Suyama M."/>
            <person name="Torrents D."/>
            <person name="Alexandersson M."/>
            <person name="Trask B.J."/>
            <person name="Young J.M."/>
            <person name="Huang H."/>
            <person name="Wang H."/>
            <person name="Xing H."/>
            <person name="Daniels S."/>
            <person name="Gietzen D."/>
            <person name="Schmidt J."/>
            <person name="Stevens K."/>
            <person name="Vitt U."/>
            <person name="Wingrove J."/>
            <person name="Camara F."/>
            <person name="Mar Alba M."/>
            <person name="Abril J.F."/>
            <person name="Guigo R."/>
            <person name="Smit A."/>
            <person name="Dubchak I."/>
            <person name="Rubin E.M."/>
            <person name="Couronne O."/>
            <person name="Poliakov A."/>
            <person name="Huebner N."/>
            <person name="Ganten D."/>
            <person name="Goesele C."/>
            <person name="Hummel O."/>
            <person name="Kreitler T."/>
            <person name="Lee Y.-A."/>
            <person name="Monti J."/>
            <person name="Schulz H."/>
            <person name="Zimdahl H."/>
            <person name="Himmelbauer H."/>
            <person name="Lehrach H."/>
            <person name="Jacob H.J."/>
            <person name="Bromberg S."/>
            <person name="Gullings-Handley J."/>
            <person name="Jensen-Seaman M.I."/>
            <person name="Kwitek A.E."/>
            <person name="Lazar J."/>
            <person name="Pasko D."/>
            <person name="Tonellato P.J."/>
            <person name="Twigger S."/>
            <person name="Ponting C.P."/>
            <person name="Duarte J.M."/>
            <person name="Rice S."/>
            <person name="Goodstadt L."/>
            <person name="Beatson S.A."/>
            <person name="Emes R.D."/>
            <person name="Winter E.E."/>
            <person name="Webber C."/>
            <person name="Brandt P."/>
            <person name="Nyakatura G."/>
            <person name="Adetobi M."/>
            <person name="Chiaromonte F."/>
            <person name="Elnitski L."/>
            <person name="Eswara P."/>
            <person name="Hardison R.C."/>
            <person name="Hou M."/>
            <person name="Kolbe D."/>
            <person name="Makova K."/>
            <person name="Miller W."/>
            <person name="Nekrutenko A."/>
            <person name="Riemer C."/>
            <person name="Schwartz S."/>
            <person name="Taylor J."/>
            <person name="Yang S."/>
            <person name="Zhang Y."/>
            <person name="Lindpaintner K."/>
            <person name="Andrews T.D."/>
            <person name="Caccamo M."/>
            <person name="Clamp M."/>
            <person name="Clarke L."/>
            <person name="Curwen V."/>
            <person name="Durbin R.M."/>
            <person name="Eyras E."/>
            <person name="Searle S.M."/>
            <person name="Cooper G.M."/>
            <person name="Batzoglou S."/>
            <person name="Brudno M."/>
            <person name="Sidow A."/>
            <person name="Stone E.A."/>
            <person name="Payseur B.A."/>
            <person name="Bourque G."/>
            <person name="Lopez-Otin C."/>
            <person name="Puente X.S."/>
            <person name="Chakrabarti K."/>
            <person name="Chatterji S."/>
            <person name="Dewey C."/>
            <person name="Pachter L."/>
            <person name="Bray N."/>
            <person name="Yap V.B."/>
            <person name="Caspi A."/>
            <person name="Tesler G."/>
            <person name="Pevzner P.A."/>
            <person name="Haussler D."/>
            <person name="Roskin K.M."/>
            <person name="Baertsch R."/>
            <person name="Clawson H."/>
            <person name="Furey T.S."/>
            <person name="Hinrichs A.S."/>
            <person name="Karolchik D."/>
            <person name="Kent W.J."/>
            <person name="Rosenbloom K.R."/>
            <person name="Trumbower H."/>
            <person name="Weirauch M."/>
            <person name="Cooper D.N."/>
            <person name="Stenson P.D."/>
            <person name="Ma B."/>
            <person name="Brent M."/>
            <person name="Arumugam M."/>
            <person name="Shteynberg D."/>
            <person name="Copley R.R."/>
            <person name="Taylor M.S."/>
            <person name="Riethman H."/>
            <person name="Mudunuri U."/>
            <person name="Peterson J."/>
            <person name="Guyer M."/>
            <person name="Felsenfeld A."/>
            <person name="Old S."/>
            <person name="Mockrin S."/>
            <person name="Collins F.S."/>
        </authorList>
    </citation>
    <scope>NUCLEOTIDE SEQUENCE [LARGE SCALE GENOMIC DNA]</scope>
    <source>
        <strain>Brown Norway</strain>
    </source>
</reference>
<reference key="2">
    <citation type="submission" date="2005-07" db="EMBL/GenBank/DDBJ databases">
        <authorList>
            <person name="Mural R.J."/>
            <person name="Adams M.D."/>
            <person name="Myers E.W."/>
            <person name="Smith H.O."/>
            <person name="Venter J.C."/>
        </authorList>
    </citation>
    <scope>NUCLEOTIDE SEQUENCE [LARGE SCALE GENOMIC DNA]</scope>
    <source>
        <strain>Brown Norway</strain>
    </source>
</reference>
<reference key="3">
    <citation type="journal article" date="2013" name="FASEB J.">
        <title>Systematic analysis of rat 12/15-lipoxygenase enzymes reveals critical role for spinal eLOX3 hepoxilin synthase activity in inflammatory hyperalgesia.</title>
        <authorList>
            <person name="Gregus A.M."/>
            <person name="Dumlao D.S."/>
            <person name="Wei S.C."/>
            <person name="Norris P.C."/>
            <person name="Catella L.C."/>
            <person name="Meyerstein F.G."/>
            <person name="Buczynski M.W."/>
            <person name="Steinauer J.J."/>
            <person name="Fitzsimmons B.L."/>
            <person name="Yaksh T.L."/>
            <person name="Dennis E.A."/>
        </authorList>
    </citation>
    <scope>FUNCTION</scope>
</reference>
<proteinExistence type="inferred from homology"/>
<sequence length="662" mass="75466">MGKYKILVVTGDSLLAGSTNLVQLWLVGEHAEADLGKQLRPLRGRKTELEIDVPLHLGRLLVVKLRKHKGLLDSDWFCKWITVQGPGIQGEAFFPCYSWVQGKETIYLPEGTALKVNDDTKNLFRKYREQELEDRRNVYRWGSWKEGLILPIAGSTERDLPRNQRFMEDKDLDFSLSLAKVLKDFAIKGTLDFVSRVQHLEDYQKVFPHSKTALAGRVRDSWKEDALFGYQFLNGANPMLLRRSKRLPARLVLPPGMEDLQTQLEKELKAGSLFEADFSLLDGVKPNVIIFKQQHVAAPLVMLKLQSDGRLLPMVIQLQPPRHGCPPPLLFLPSDPPMAWLLAKIWVRSSDFQVHQLQSHLLRGHLMAEVISVATMRSLPSLHPIYKLLAPHFRYTMEINTLARNNLVSEWGIFDLVVSTGSGGHVDILQRATACLTYRSFCPPDDLADRGLLDVKSSLYARDALRLWEIISRYVGRMVELFYKNDREVKEDPELQVWCREVTEIGLLGAQDRGFPLSLESRAQLCRFVTMCIFTCTGQHASTHLGQLDWYSWIPNGPCTMRKPPPTSKNVTEGDILDALPCLQQARMQITFTKFLGRHQPVMVALGQHKEEYFSDPGARAVLKQFQEELAVMDKEIEVRNASLDLPYEYLRPSMVENSVTI</sequence>
<keyword id="KW-0963">Cytoplasm</keyword>
<keyword id="KW-0223">Dioxygenase</keyword>
<keyword id="KW-0276">Fatty acid metabolism</keyword>
<keyword id="KW-0408">Iron</keyword>
<keyword id="KW-0443">Lipid metabolism</keyword>
<keyword id="KW-0479">Metal-binding</keyword>
<keyword id="KW-0560">Oxidoreductase</keyword>
<keyword id="KW-1185">Reference proteome</keyword>
<gene>
    <name evidence="8" type="primary">Alox12e</name>
</gene>
<name>LX12E_RAT</name>
<dbReference type="EC" id="1.13.11.-" evidence="1"/>
<dbReference type="EC" id="1.13.11.31" evidence="4"/>
<dbReference type="EMBL" id="AABR06064408">
    <property type="status" value="NOT_ANNOTATED_CDS"/>
    <property type="molecule type" value="Genomic_DNA"/>
</dbReference>
<dbReference type="EMBL" id="CH473948">
    <property type="protein sequence ID" value="EDM04999.1"/>
    <property type="molecule type" value="Genomic_DNA"/>
</dbReference>
<dbReference type="RefSeq" id="NP_001100484.1">
    <property type="nucleotide sequence ID" value="NM_001107014.1"/>
</dbReference>
<dbReference type="SMR" id="D3ZQF9"/>
<dbReference type="FunCoup" id="D3ZQF9">
    <property type="interactions" value="1"/>
</dbReference>
<dbReference type="STRING" id="10116.ENSRNOP00000025910"/>
<dbReference type="PhosphoSitePlus" id="D3ZQF9"/>
<dbReference type="PaxDb" id="10116-ENSRNOP00000025910"/>
<dbReference type="GeneID" id="303252"/>
<dbReference type="KEGG" id="rno:303252"/>
<dbReference type="UCSC" id="RGD:1307642">
    <property type="organism name" value="rat"/>
</dbReference>
<dbReference type="AGR" id="RGD:1307642"/>
<dbReference type="CTD" id="11685"/>
<dbReference type="RGD" id="1307642">
    <property type="gene designation" value="Alox12e"/>
</dbReference>
<dbReference type="VEuPathDB" id="HostDB:ENSRNOG00000019074"/>
<dbReference type="eggNOG" id="ENOG502QQSP">
    <property type="taxonomic scope" value="Eukaryota"/>
</dbReference>
<dbReference type="HOGENOM" id="CLU_004282_3_3_1"/>
<dbReference type="InParanoid" id="D3ZQF9"/>
<dbReference type="OrthoDB" id="407298at2759"/>
<dbReference type="PhylomeDB" id="D3ZQF9"/>
<dbReference type="TreeFam" id="TF105320"/>
<dbReference type="UniPathway" id="UPA00881"/>
<dbReference type="PRO" id="PR:D3ZQF9"/>
<dbReference type="Proteomes" id="UP000002494">
    <property type="component" value="Chromosome 10"/>
</dbReference>
<dbReference type="Proteomes" id="UP000234681">
    <property type="component" value="Chromosome 10"/>
</dbReference>
<dbReference type="Bgee" id="ENSRNOG00000019074">
    <property type="expression patterns" value="Expressed in thymus and 6 other cell types or tissues"/>
</dbReference>
<dbReference type="GO" id="GO:0005829">
    <property type="term" value="C:cytosol"/>
    <property type="evidence" value="ECO:0000318"/>
    <property type="project" value="GO_Central"/>
</dbReference>
<dbReference type="GO" id="GO:0005886">
    <property type="term" value="C:plasma membrane"/>
    <property type="evidence" value="ECO:0000318"/>
    <property type="project" value="GO_Central"/>
</dbReference>
<dbReference type="GO" id="GO:0004052">
    <property type="term" value="F:arachidonate 12(S)-lipoxygenase activity"/>
    <property type="evidence" value="ECO:0000250"/>
    <property type="project" value="UniProtKB"/>
</dbReference>
<dbReference type="GO" id="GO:0050473">
    <property type="term" value="F:arachidonate 15-lipoxygenase activity"/>
    <property type="evidence" value="ECO:0000318"/>
    <property type="project" value="GO_Central"/>
</dbReference>
<dbReference type="GO" id="GO:0005506">
    <property type="term" value="F:iron ion binding"/>
    <property type="evidence" value="ECO:0007669"/>
    <property type="project" value="InterPro"/>
</dbReference>
<dbReference type="GO" id="GO:0016165">
    <property type="term" value="F:linoleate 13S-lipoxygenase activity"/>
    <property type="evidence" value="ECO:0000250"/>
    <property type="project" value="UniProtKB"/>
</dbReference>
<dbReference type="GO" id="GO:0019369">
    <property type="term" value="P:arachidonate metabolic process"/>
    <property type="evidence" value="ECO:0000314"/>
    <property type="project" value="UniProtKB"/>
</dbReference>
<dbReference type="GO" id="GO:0034440">
    <property type="term" value="P:lipid oxidation"/>
    <property type="evidence" value="ECO:0000318"/>
    <property type="project" value="GO_Central"/>
</dbReference>
<dbReference type="GO" id="GO:0019372">
    <property type="term" value="P:lipoxygenase pathway"/>
    <property type="evidence" value="ECO:0000314"/>
    <property type="project" value="UniProtKB"/>
</dbReference>
<dbReference type="CDD" id="cd01753">
    <property type="entry name" value="PLAT_LOX"/>
    <property type="match status" value="1"/>
</dbReference>
<dbReference type="FunFam" id="3.10.450.60:FF:000004">
    <property type="entry name" value="Arachidonate 12-lipoxygenase, 12S-type"/>
    <property type="match status" value="1"/>
</dbReference>
<dbReference type="FunFam" id="1.20.245.10:FF:000001">
    <property type="entry name" value="Arachidonate 5-lipoxygenase a"/>
    <property type="match status" value="1"/>
</dbReference>
<dbReference type="Gene3D" id="3.10.450.60">
    <property type="match status" value="1"/>
</dbReference>
<dbReference type="Gene3D" id="1.20.245.10">
    <property type="entry name" value="Lipoxygenase-1, Domain 5"/>
    <property type="match status" value="1"/>
</dbReference>
<dbReference type="Gene3D" id="2.60.60.20">
    <property type="entry name" value="PLAT/LH2 domain"/>
    <property type="match status" value="1"/>
</dbReference>
<dbReference type="InterPro" id="IPR000907">
    <property type="entry name" value="LipOase"/>
</dbReference>
<dbReference type="InterPro" id="IPR013819">
    <property type="entry name" value="LipOase_C"/>
</dbReference>
<dbReference type="InterPro" id="IPR036226">
    <property type="entry name" value="LipOase_C_sf"/>
</dbReference>
<dbReference type="InterPro" id="IPR020834">
    <property type="entry name" value="LipOase_CS"/>
</dbReference>
<dbReference type="InterPro" id="IPR020833">
    <property type="entry name" value="LipOase_Fe_BS"/>
</dbReference>
<dbReference type="InterPro" id="IPR001885">
    <property type="entry name" value="LipOase_mml"/>
</dbReference>
<dbReference type="InterPro" id="IPR001024">
    <property type="entry name" value="PLAT/LH2_dom"/>
</dbReference>
<dbReference type="InterPro" id="IPR036392">
    <property type="entry name" value="PLAT/LH2_dom_sf"/>
</dbReference>
<dbReference type="InterPro" id="IPR042062">
    <property type="entry name" value="PLAT_LOX_verte"/>
</dbReference>
<dbReference type="PANTHER" id="PTHR11771">
    <property type="entry name" value="LIPOXYGENASE"/>
    <property type="match status" value="1"/>
</dbReference>
<dbReference type="Pfam" id="PF00305">
    <property type="entry name" value="Lipoxygenase"/>
    <property type="match status" value="1"/>
</dbReference>
<dbReference type="Pfam" id="PF01477">
    <property type="entry name" value="PLAT"/>
    <property type="match status" value="1"/>
</dbReference>
<dbReference type="PRINTS" id="PR00087">
    <property type="entry name" value="LIPOXYGENASE"/>
</dbReference>
<dbReference type="PRINTS" id="PR00467">
    <property type="entry name" value="MAMLPOXGNASE"/>
</dbReference>
<dbReference type="SMART" id="SM00308">
    <property type="entry name" value="LH2"/>
    <property type="match status" value="1"/>
</dbReference>
<dbReference type="SUPFAM" id="SSF49723">
    <property type="entry name" value="Lipase/lipooxygenase domain (PLAT/LH2 domain)"/>
    <property type="match status" value="1"/>
</dbReference>
<dbReference type="SUPFAM" id="SSF48484">
    <property type="entry name" value="Lipoxigenase"/>
    <property type="match status" value="1"/>
</dbReference>
<dbReference type="PROSITE" id="PS00711">
    <property type="entry name" value="LIPOXYGENASE_1"/>
    <property type="match status" value="1"/>
</dbReference>
<dbReference type="PROSITE" id="PS00081">
    <property type="entry name" value="LIPOXYGENASE_2"/>
    <property type="match status" value="1"/>
</dbReference>
<dbReference type="PROSITE" id="PS51393">
    <property type="entry name" value="LIPOXYGENASE_3"/>
    <property type="match status" value="1"/>
</dbReference>
<dbReference type="PROSITE" id="PS50095">
    <property type="entry name" value="PLAT"/>
    <property type="match status" value="1"/>
</dbReference>
<organism>
    <name type="scientific">Rattus norvegicus</name>
    <name type="common">Rat</name>
    <dbReference type="NCBI Taxonomy" id="10116"/>
    <lineage>
        <taxon>Eukaryota</taxon>
        <taxon>Metazoa</taxon>
        <taxon>Chordata</taxon>
        <taxon>Craniata</taxon>
        <taxon>Vertebrata</taxon>
        <taxon>Euteleostomi</taxon>
        <taxon>Mammalia</taxon>
        <taxon>Eutheria</taxon>
        <taxon>Euarchontoglires</taxon>
        <taxon>Glires</taxon>
        <taxon>Rodentia</taxon>
        <taxon>Myomorpha</taxon>
        <taxon>Muroidea</taxon>
        <taxon>Muridae</taxon>
        <taxon>Murinae</taxon>
        <taxon>Rattus</taxon>
    </lineage>
</organism>
<accession>D3ZQF9</accession>